<keyword id="KW-0002">3D-structure</keyword>
<keyword id="KW-0963">Cytoplasm</keyword>
<keyword id="KW-0967">Endosome</keyword>
<keyword id="KW-0472">Membrane</keyword>
<keyword id="KW-0653">Protein transport</keyword>
<keyword id="KW-1185">Reference proteome</keyword>
<keyword id="KW-0813">Transport</keyword>
<protein>
    <recommendedName>
        <fullName>Vacuolar protein sorting-associated protein 28</fullName>
    </recommendedName>
    <alternativeName>
        <fullName>ESCRT-I complex subunit VPS28</fullName>
    </alternativeName>
</protein>
<evidence type="ECO:0000255" key="1">
    <source>
        <dbReference type="PROSITE-ProRule" id="PRU00642"/>
    </source>
</evidence>
<evidence type="ECO:0000255" key="2">
    <source>
        <dbReference type="PROSITE-ProRule" id="PRU00645"/>
    </source>
</evidence>
<evidence type="ECO:0000269" key="3">
    <source>
    </source>
</evidence>
<evidence type="ECO:0000269" key="4">
    <source>
    </source>
</evidence>
<evidence type="ECO:0000269" key="5">
    <source>
    </source>
</evidence>
<evidence type="ECO:0000269" key="6">
    <source>
    </source>
</evidence>
<evidence type="ECO:0000269" key="7">
    <source>
    </source>
</evidence>
<evidence type="ECO:0000305" key="8"/>
<evidence type="ECO:0007829" key="9">
    <source>
        <dbReference type="PDB" id="2F6M"/>
    </source>
</evidence>
<evidence type="ECO:0007829" key="10">
    <source>
        <dbReference type="PDB" id="2J9U"/>
    </source>
</evidence>
<evidence type="ECO:0007829" key="11">
    <source>
        <dbReference type="PDB" id="2P22"/>
    </source>
</evidence>
<feature type="chain" id="PRO_0000120958" description="Vacuolar protein sorting-associated protein 28">
    <location>
        <begin position="1"/>
        <end position="242"/>
    </location>
</feature>
<feature type="domain" description="VPS28 N-terminal" evidence="2">
    <location>
        <begin position="11"/>
        <end position="125"/>
    </location>
</feature>
<feature type="domain" description="VPS28 C-terminal" evidence="1">
    <location>
        <begin position="148"/>
        <end position="242"/>
    </location>
</feature>
<feature type="region of interest" description="Interaction with VSP36 and VPS20" evidence="7">
    <location>
        <begin position="148"/>
        <end position="242"/>
    </location>
</feature>
<feature type="mutagenesis site" description="Abolishes ESCRT-I complex assembly; class E phenotype (malformed late MVB); when associated with D-44." evidence="6">
    <original>L</original>
    <variation>D</variation>
    <location>
        <position position="40"/>
    </location>
</feature>
<feature type="mutagenesis site" description="Abolishes ESCRT-I complex assembly; class E phenotype (malformed late MVB); when associated with D-40." evidence="6">
    <original>Y</original>
    <variation>D</variation>
    <location>
        <position position="44"/>
    </location>
</feature>
<feature type="mutagenesis site" description="Abolishes interaction with VPS20." evidence="7">
    <original>FDLE</original>
    <variation>ASLA</variation>
    <location>
        <begin position="228"/>
        <end position="231"/>
    </location>
</feature>
<feature type="sequence conflict" description="In Ref. 4; AAT92809." evidence="8" ref="4">
    <original>R</original>
    <variation>K</variation>
    <location>
        <position position="193"/>
    </location>
</feature>
<feature type="strand" evidence="11">
    <location>
        <begin position="10"/>
        <end position="12"/>
    </location>
</feature>
<feature type="helix" evidence="9">
    <location>
        <begin position="14"/>
        <end position="17"/>
    </location>
</feature>
<feature type="strand" evidence="11">
    <location>
        <begin position="27"/>
        <end position="29"/>
    </location>
</feature>
<feature type="helix" evidence="9">
    <location>
        <begin position="31"/>
        <end position="58"/>
    </location>
</feature>
<feature type="helix" evidence="9">
    <location>
        <begin position="64"/>
        <end position="82"/>
    </location>
</feature>
<feature type="turn" evidence="9">
    <location>
        <begin position="85"/>
        <end position="88"/>
    </location>
</feature>
<feature type="helix" evidence="9">
    <location>
        <begin position="89"/>
        <end position="103"/>
    </location>
</feature>
<feature type="helix" evidence="9">
    <location>
        <begin position="109"/>
        <end position="117"/>
    </location>
</feature>
<feature type="helix" evidence="10">
    <location>
        <begin position="150"/>
        <end position="168"/>
    </location>
</feature>
<feature type="helix" evidence="10">
    <location>
        <begin position="174"/>
        <end position="191"/>
    </location>
</feature>
<feature type="helix" evidence="10">
    <location>
        <begin position="199"/>
        <end position="210"/>
    </location>
</feature>
<feature type="helix" evidence="10">
    <location>
        <begin position="220"/>
        <end position="240"/>
    </location>
</feature>
<accession>Q02767</accession>
<accession>D6W3V0</accession>
<accession>E9P8X2</accession>
<accession>P87328</accession>
<proteinExistence type="evidence at protein level"/>
<reference key="1">
    <citation type="journal article" date="1996" name="Mol. Biol. Cell">
        <title>Multilamellar endosome-like compartment accumulates in the yeast vps28 vacuolar protein sorting mutant.</title>
        <authorList>
            <person name="Rieder S.E."/>
            <person name="Banta L.M."/>
            <person name="Koehrer K."/>
            <person name="McCaffery J.M."/>
            <person name="Emr S.D."/>
        </authorList>
    </citation>
    <scope>NUCLEOTIDE SEQUENCE [GENOMIC DNA]</scope>
</reference>
<reference key="2">
    <citation type="journal article" date="1997" name="Nature">
        <title>The nucleotide sequence of Saccharomyces cerevisiae chromosome XVI.</title>
        <authorList>
            <person name="Bussey H."/>
            <person name="Storms R.K."/>
            <person name="Ahmed A."/>
            <person name="Albermann K."/>
            <person name="Allen E."/>
            <person name="Ansorge W."/>
            <person name="Araujo R."/>
            <person name="Aparicio A."/>
            <person name="Barrell B.G."/>
            <person name="Badcock K."/>
            <person name="Benes V."/>
            <person name="Botstein D."/>
            <person name="Bowman S."/>
            <person name="Brueckner M."/>
            <person name="Carpenter J."/>
            <person name="Cherry J.M."/>
            <person name="Chung E."/>
            <person name="Churcher C.M."/>
            <person name="Coster F."/>
            <person name="Davis K."/>
            <person name="Davis R.W."/>
            <person name="Dietrich F.S."/>
            <person name="Delius H."/>
            <person name="DiPaolo T."/>
            <person name="Dubois E."/>
            <person name="Duesterhoeft A."/>
            <person name="Duncan M."/>
            <person name="Floeth M."/>
            <person name="Fortin N."/>
            <person name="Friesen J.D."/>
            <person name="Fritz C."/>
            <person name="Goffeau A."/>
            <person name="Hall J."/>
            <person name="Hebling U."/>
            <person name="Heumann K."/>
            <person name="Hilbert H."/>
            <person name="Hillier L.W."/>
            <person name="Hunicke-Smith S."/>
            <person name="Hyman R.W."/>
            <person name="Johnston M."/>
            <person name="Kalman S."/>
            <person name="Kleine K."/>
            <person name="Komp C."/>
            <person name="Kurdi O."/>
            <person name="Lashkari D."/>
            <person name="Lew H."/>
            <person name="Lin A."/>
            <person name="Lin D."/>
            <person name="Louis E.J."/>
            <person name="Marathe R."/>
            <person name="Messenguy F."/>
            <person name="Mewes H.-W."/>
            <person name="Mirtipati S."/>
            <person name="Moestl D."/>
            <person name="Mueller-Auer S."/>
            <person name="Namath A."/>
            <person name="Nentwich U."/>
            <person name="Oefner P."/>
            <person name="Pearson D."/>
            <person name="Petel F.X."/>
            <person name="Pohl T.M."/>
            <person name="Purnelle B."/>
            <person name="Rajandream M.A."/>
            <person name="Rechmann S."/>
            <person name="Rieger M."/>
            <person name="Riles L."/>
            <person name="Roberts D."/>
            <person name="Schaefer M."/>
            <person name="Scharfe M."/>
            <person name="Scherens B."/>
            <person name="Schramm S."/>
            <person name="Schroeder M."/>
            <person name="Sdicu A.-M."/>
            <person name="Tettelin H."/>
            <person name="Urrestarazu L.A."/>
            <person name="Ushinsky S."/>
            <person name="Vierendeels F."/>
            <person name="Vissers S."/>
            <person name="Voss H."/>
            <person name="Walsh S.V."/>
            <person name="Wambutt R."/>
            <person name="Wang Y."/>
            <person name="Wedler E."/>
            <person name="Wedler H."/>
            <person name="Winnett E."/>
            <person name="Zhong W.-W."/>
            <person name="Zollner A."/>
            <person name="Vo D.H."/>
            <person name="Hani J."/>
        </authorList>
    </citation>
    <scope>NUCLEOTIDE SEQUENCE [LARGE SCALE GENOMIC DNA]</scope>
    <source>
        <strain>ATCC 204508 / S288c</strain>
    </source>
</reference>
<reference key="3">
    <citation type="journal article" date="2014" name="G3 (Bethesda)">
        <title>The reference genome sequence of Saccharomyces cerevisiae: Then and now.</title>
        <authorList>
            <person name="Engel S.R."/>
            <person name="Dietrich F.S."/>
            <person name="Fisk D.G."/>
            <person name="Binkley G."/>
            <person name="Balakrishnan R."/>
            <person name="Costanzo M.C."/>
            <person name="Dwight S.S."/>
            <person name="Hitz B.C."/>
            <person name="Karra K."/>
            <person name="Nash R.S."/>
            <person name="Weng S."/>
            <person name="Wong E.D."/>
            <person name="Lloyd P."/>
            <person name="Skrzypek M.S."/>
            <person name="Miyasato S.R."/>
            <person name="Simison M."/>
            <person name="Cherry J.M."/>
        </authorList>
    </citation>
    <scope>GENOME REANNOTATION</scope>
    <source>
        <strain>ATCC 204508 / S288c</strain>
    </source>
</reference>
<reference key="4">
    <citation type="journal article" date="2007" name="Genome Res.">
        <title>Approaching a complete repository of sequence-verified protein-encoding clones for Saccharomyces cerevisiae.</title>
        <authorList>
            <person name="Hu Y."/>
            <person name="Rolfs A."/>
            <person name="Bhullar B."/>
            <person name="Murthy T.V.S."/>
            <person name="Zhu C."/>
            <person name="Berger M.F."/>
            <person name="Camargo A.A."/>
            <person name="Kelley F."/>
            <person name="McCarron S."/>
            <person name="Jepson D."/>
            <person name="Richardson A."/>
            <person name="Raphael J."/>
            <person name="Moreira D."/>
            <person name="Taycher E."/>
            <person name="Zuo D."/>
            <person name="Mohr S."/>
            <person name="Kane M.F."/>
            <person name="Williamson J."/>
            <person name="Simpson A.J.G."/>
            <person name="Bulyk M.L."/>
            <person name="Harlow E."/>
            <person name="Marsischky G."/>
            <person name="Kolodner R.D."/>
            <person name="LaBaer J."/>
        </authorList>
    </citation>
    <scope>NUCLEOTIDE SEQUENCE [GENOMIC DNA]</scope>
    <source>
        <strain>ATCC 204508 / S288c</strain>
    </source>
</reference>
<reference key="5">
    <citation type="journal article" date="2003" name="Nature">
        <title>Global analysis of protein localization in budding yeast.</title>
        <authorList>
            <person name="Huh W.-K."/>
            <person name="Falvo J.V."/>
            <person name="Gerke L.C."/>
            <person name="Carroll A.S."/>
            <person name="Howson R.W."/>
            <person name="Weissman J.S."/>
            <person name="O'Shea E.K."/>
        </authorList>
    </citation>
    <scope>SUBCELLULAR LOCATION [LARGE SCALE ANALYSIS]</scope>
</reference>
<reference key="6">
    <citation type="journal article" date="2003" name="Nature">
        <title>Global analysis of protein expression in yeast.</title>
        <authorList>
            <person name="Ghaemmaghami S."/>
            <person name="Huh W.-K."/>
            <person name="Bower K."/>
            <person name="Howson R.W."/>
            <person name="Belle A."/>
            <person name="Dephoure N."/>
            <person name="O'Shea E.K."/>
            <person name="Weissman J.S."/>
        </authorList>
    </citation>
    <scope>LEVEL OF PROTEIN EXPRESSION [LARGE SCALE ANALYSIS]</scope>
</reference>
<reference key="7">
    <citation type="journal article" date="2003" name="J. Cell Biol.">
        <title>Vps27 recruits ESCRT machinery to endosomes during MVB sorting.</title>
        <authorList>
            <person name="Katzmann D.J."/>
            <person name="Stefan C.J."/>
            <person name="Babst M."/>
            <person name="Emr S.D."/>
        </authorList>
    </citation>
    <scope>SUBCELLULAR LOCATION</scope>
    <scope>INTERACTION WITH VPS27</scope>
</reference>
<reference key="8">
    <citation type="journal article" date="2006" name="Cell">
        <title>ESCRT-I core and ESCRT-II GLUE domain structures reveal role for GLUE in linking to ESCRT-I and membranes.</title>
        <authorList>
            <person name="Teo H."/>
            <person name="Gill D.J."/>
            <person name="Sun J."/>
            <person name="Perisic O."/>
            <person name="Veprintsev D.B."/>
            <person name="Vallis Y."/>
            <person name="Emr S.D."/>
            <person name="Williams R.L."/>
        </authorList>
    </citation>
    <scope>X-RAY CRYSTALLOGRAPHY (3.6 ANGSTROMS) OF 1-147 IN COMPLEX WITH STP22 AND SRN2</scope>
    <scope>INTERACTION WITH VPS36</scope>
</reference>
<reference key="9">
    <citation type="journal article" date="2006" name="Cell">
        <title>Structural and functional organization of the ESCRT-I trafficking complex.</title>
        <authorList>
            <person name="Kostelansky M.S."/>
            <person name="Sun J."/>
            <person name="Lee S."/>
            <person name="Kim J."/>
            <person name="Ghirlando R."/>
            <person name="Hierro A."/>
            <person name="Emr S.D."/>
            <person name="Hurley J.H."/>
        </authorList>
    </citation>
    <scope>X-RAY CRYSTALLOGRAPHY (2.8 ANGSTROMS) OF 13-125 IN COMPLEX WITH STP22 AND SRN2</scope>
    <scope>MUTAGENESIS OF LEU-40 AND TYR-44</scope>
</reference>
<reference key="10">
    <citation type="journal article" date="2006" name="Traffic">
        <title>The crystal structure of the C-terminal domain of Vps28 reveals a conserved surface required for Vps20 recruitment.</title>
        <authorList>
            <person name="Pineda-Molina E."/>
            <person name="Belrhali H."/>
            <person name="Piefer A.J."/>
            <person name="Akula I."/>
            <person name="Bates P."/>
            <person name="Weissenhorn W."/>
        </authorList>
    </citation>
    <scope>X-RAY CRYSTALLOGRAPHY (3.05 ANGSTROMS) OF 148-241</scope>
    <scope>SELF-ASSOCIATION</scope>
    <scope>INTERACTION WITH VPS20</scope>
    <scope>MUTAGENESIS OF 228-PHE--GLU-231</scope>
</reference>
<reference key="11">
    <citation type="journal article" date="2007" name="EMBO J.">
        <title>Structural insight into the ESCRT-I/-II link and its role in MVB trafficking.</title>
        <authorList>
            <person name="Gill D.J."/>
            <person name="Teo H."/>
            <person name="Sun J."/>
            <person name="Perisic O."/>
            <person name="Veprintsev D.B."/>
            <person name="Emr S.D."/>
            <person name="Williams R.L."/>
        </authorList>
    </citation>
    <scope>X-RAY CRYSTALLOGRAPHY (2.0 ANGSTROMS) OF 148-242</scope>
    <scope>COMPOSITION OF THE ESCRT-I COMPLEX</scope>
</reference>
<reference key="12">
    <citation type="journal article" date="2007" name="Cell">
        <title>Molecular architecture and functional model of the complete yeast ESCRT-I heterotetramer.</title>
        <authorList>
            <person name="Kostelansky M.S."/>
            <person name="Schluter C."/>
            <person name="Tam Y.Y."/>
            <person name="Lee S."/>
            <person name="Ghirlando R."/>
            <person name="Beach B."/>
            <person name="Conibear E."/>
            <person name="Hurley J.H."/>
        </authorList>
    </citation>
    <scope>X-RAY CRYSTALLOGRAPHY (2.7 ANGSTROMS) OF 1-118</scope>
    <scope>COMPOSITION OF THE ESCRT-I COMPLEX</scope>
</reference>
<sequence length="242" mass="27702">MQKHNIKLNQNQDISQLFHDEVPLFDNSITSKDKEVIETLSEIYSIVITLDHVEKAYLKDSIDDTQYTNTVDKLLKQFKVYLNSQNKEEINKHFQSIEAFCDTYNITASNAITRLERGIPITAEHAISTTTSAPSGDNKQSSSSDKKFNAKYVAEATGNFITVMDALKLNYNAKDQLHPLLAELLISINRVTRDDFENRSKLIDWIVRINKLSIGDTLTETQIRELLFDLELAYKSFYALLD</sequence>
<dbReference type="EMBL" id="U50630">
    <property type="protein sequence ID" value="AAB40936.1"/>
    <property type="molecule type" value="Genomic_DNA"/>
</dbReference>
<dbReference type="EMBL" id="U39205">
    <property type="protein sequence ID" value="AAB68300.1"/>
    <property type="molecule type" value="Genomic_DNA"/>
</dbReference>
<dbReference type="EMBL" id="AY692790">
    <property type="protein sequence ID" value="AAT92809.1"/>
    <property type="molecule type" value="Genomic_DNA"/>
</dbReference>
<dbReference type="EMBL" id="BK006949">
    <property type="protein sequence ID" value="DAA11366.1"/>
    <property type="molecule type" value="Genomic_DNA"/>
</dbReference>
<dbReference type="PIR" id="S60925">
    <property type="entry name" value="S60925"/>
</dbReference>
<dbReference type="RefSeq" id="NP_015260.1">
    <property type="nucleotide sequence ID" value="NM_001183879.1"/>
</dbReference>
<dbReference type="PDB" id="2CAZ">
    <property type="method" value="X-ray"/>
    <property type="resolution" value="3.60 A"/>
    <property type="chains" value="B/E=1-147"/>
</dbReference>
<dbReference type="PDB" id="2F66">
    <property type="method" value="X-ray"/>
    <property type="resolution" value="2.80 A"/>
    <property type="chains" value="B/E=13-125"/>
</dbReference>
<dbReference type="PDB" id="2F6M">
    <property type="method" value="X-ray"/>
    <property type="resolution" value="2.10 A"/>
    <property type="chains" value="B/D=13-118"/>
</dbReference>
<dbReference type="PDB" id="2G3K">
    <property type="method" value="X-ray"/>
    <property type="resolution" value="3.05 A"/>
    <property type="chains" value="A/B/C/D/E/F/G=148-241"/>
</dbReference>
<dbReference type="PDB" id="2J9U">
    <property type="method" value="X-ray"/>
    <property type="resolution" value="2.00 A"/>
    <property type="chains" value="A/C=148-242"/>
</dbReference>
<dbReference type="PDB" id="2J9V">
    <property type="method" value="X-ray"/>
    <property type="resolution" value="2.00 A"/>
    <property type="chains" value="A=148-242"/>
</dbReference>
<dbReference type="PDB" id="2P22">
    <property type="method" value="X-ray"/>
    <property type="resolution" value="2.70 A"/>
    <property type="chains" value="B=1-118"/>
</dbReference>
<dbReference type="PDBsum" id="2CAZ"/>
<dbReference type="PDBsum" id="2F66"/>
<dbReference type="PDBsum" id="2F6M"/>
<dbReference type="PDBsum" id="2G3K"/>
<dbReference type="PDBsum" id="2J9U"/>
<dbReference type="PDBsum" id="2J9V"/>
<dbReference type="PDBsum" id="2P22"/>
<dbReference type="SMR" id="Q02767"/>
<dbReference type="BioGRID" id="36114">
    <property type="interactions" value="114"/>
</dbReference>
<dbReference type="ComplexPortal" id="CPX-940">
    <property type="entry name" value="ESCRT-I complex"/>
</dbReference>
<dbReference type="DIP" id="DIP-5828N"/>
<dbReference type="FunCoup" id="Q02767">
    <property type="interactions" value="674"/>
</dbReference>
<dbReference type="IntAct" id="Q02767">
    <property type="interactions" value="6"/>
</dbReference>
<dbReference type="MINT" id="Q02767"/>
<dbReference type="STRING" id="4932.YPL065W"/>
<dbReference type="TCDB" id="3.A.31.1.1">
    <property type="family name" value="the endosomal sorting complexes required for transport iii (escrt-iii) family"/>
</dbReference>
<dbReference type="iPTMnet" id="Q02767"/>
<dbReference type="PaxDb" id="4932-YPL065W"/>
<dbReference type="PeptideAtlas" id="Q02767"/>
<dbReference type="EnsemblFungi" id="YPL065W_mRNA">
    <property type="protein sequence ID" value="YPL065W"/>
    <property type="gene ID" value="YPL065W"/>
</dbReference>
<dbReference type="GeneID" id="856040"/>
<dbReference type="KEGG" id="sce:YPL065W"/>
<dbReference type="AGR" id="SGD:S000005986"/>
<dbReference type="SGD" id="S000005986">
    <property type="gene designation" value="VPS28"/>
</dbReference>
<dbReference type="VEuPathDB" id="FungiDB:YPL065W"/>
<dbReference type="eggNOG" id="KOG3284">
    <property type="taxonomic scope" value="Eukaryota"/>
</dbReference>
<dbReference type="GeneTree" id="ENSGT00390000007486"/>
<dbReference type="HOGENOM" id="CLU_076417_0_0_1"/>
<dbReference type="InParanoid" id="Q02767"/>
<dbReference type="OMA" id="CDEFPTV"/>
<dbReference type="OrthoDB" id="2671at2759"/>
<dbReference type="BioCyc" id="YEAST:G3O-33974-MONOMER"/>
<dbReference type="Reactome" id="R-SCE-917729">
    <property type="pathway name" value="Endosomal Sorting Complex Required For Transport (ESCRT)"/>
</dbReference>
<dbReference type="BioGRID-ORCS" id="856040">
    <property type="hits" value="2 hits in 10 CRISPR screens"/>
</dbReference>
<dbReference type="EvolutionaryTrace" id="Q02767"/>
<dbReference type="PRO" id="PR:Q02767"/>
<dbReference type="Proteomes" id="UP000002311">
    <property type="component" value="Chromosome XVI"/>
</dbReference>
<dbReference type="RNAct" id="Q02767">
    <property type="molecule type" value="protein"/>
</dbReference>
<dbReference type="GO" id="GO:0005829">
    <property type="term" value="C:cytosol"/>
    <property type="evidence" value="ECO:0007005"/>
    <property type="project" value="SGD"/>
</dbReference>
<dbReference type="GO" id="GO:0005768">
    <property type="term" value="C:endosome"/>
    <property type="evidence" value="ECO:0000314"/>
    <property type="project" value="SGD"/>
</dbReference>
<dbReference type="GO" id="GO:0000813">
    <property type="term" value="C:ESCRT I complex"/>
    <property type="evidence" value="ECO:0000314"/>
    <property type="project" value="SGD"/>
</dbReference>
<dbReference type="GO" id="GO:0031902">
    <property type="term" value="C:late endosome membrane"/>
    <property type="evidence" value="ECO:0007669"/>
    <property type="project" value="UniProtKB-SubCell"/>
</dbReference>
<dbReference type="GO" id="GO:0044877">
    <property type="term" value="F:protein-containing complex binding"/>
    <property type="evidence" value="ECO:0000314"/>
    <property type="project" value="SGD"/>
</dbReference>
<dbReference type="GO" id="GO:1904669">
    <property type="term" value="P:ATP export"/>
    <property type="evidence" value="ECO:0000315"/>
    <property type="project" value="SGD"/>
</dbReference>
<dbReference type="GO" id="GO:0006612">
    <property type="term" value="P:protein targeting to membrane"/>
    <property type="evidence" value="ECO:0000315"/>
    <property type="project" value="SGD"/>
</dbReference>
<dbReference type="GO" id="GO:0006623">
    <property type="term" value="P:protein targeting to vacuole"/>
    <property type="evidence" value="ECO:0000315"/>
    <property type="project" value="SGD"/>
</dbReference>
<dbReference type="GO" id="GO:0043328">
    <property type="term" value="P:protein transport to vacuole involved in ubiquitin-dependent protein catabolic process via the multivesicular body sorting pathway"/>
    <property type="evidence" value="ECO:0000318"/>
    <property type="project" value="GO_Central"/>
</dbReference>
<dbReference type="GO" id="GO:0043162">
    <property type="term" value="P:ubiquitin-dependent protein catabolic process via the multivesicular body sorting pathway"/>
    <property type="evidence" value="ECO:0000314"/>
    <property type="project" value="ComplexPortal"/>
</dbReference>
<dbReference type="FunFam" id="1.20.1440.200:FF:000003">
    <property type="entry name" value="Vacuolar protein sorting-associated protein 28"/>
    <property type="match status" value="1"/>
</dbReference>
<dbReference type="FunFam" id="1.20.120.1130:FF:000001">
    <property type="entry name" value="Vacuolar protein sorting-associated protein 28 homolog"/>
    <property type="match status" value="1"/>
</dbReference>
<dbReference type="Gene3D" id="1.20.120.1130">
    <property type="match status" value="1"/>
</dbReference>
<dbReference type="Gene3D" id="1.20.1440.200">
    <property type="match status" value="1"/>
</dbReference>
<dbReference type="InterPro" id="IPR037202">
    <property type="entry name" value="ESCRT_assembly_dom"/>
</dbReference>
<dbReference type="InterPro" id="IPR007143">
    <property type="entry name" value="Vps28"/>
</dbReference>
<dbReference type="InterPro" id="IPR017899">
    <property type="entry name" value="VPS28_C"/>
</dbReference>
<dbReference type="InterPro" id="IPR037206">
    <property type="entry name" value="VPS28_C_sf"/>
</dbReference>
<dbReference type="InterPro" id="IPR017898">
    <property type="entry name" value="VPS28_N"/>
</dbReference>
<dbReference type="InterPro" id="IPR038358">
    <property type="entry name" value="VPS28_N_sf"/>
</dbReference>
<dbReference type="PANTHER" id="PTHR12937">
    <property type="entry name" value="VACUOLAR PROTEIN SORTING 28, ISOFORM 2 VPS28"/>
    <property type="match status" value="1"/>
</dbReference>
<dbReference type="PANTHER" id="PTHR12937:SF0">
    <property type="entry name" value="VACUOLAR PROTEIN SORTING-ASSOCIATED PROTEIN 28 HOMOLOG"/>
    <property type="match status" value="1"/>
</dbReference>
<dbReference type="Pfam" id="PF03997">
    <property type="entry name" value="VPS28"/>
    <property type="match status" value="1"/>
</dbReference>
<dbReference type="PIRSF" id="PIRSF017535">
    <property type="entry name" value="VPS28"/>
    <property type="match status" value="1"/>
</dbReference>
<dbReference type="SUPFAM" id="SSF140111">
    <property type="entry name" value="Endosomal sorting complex assembly domain"/>
    <property type="match status" value="1"/>
</dbReference>
<dbReference type="SUPFAM" id="SSF140427">
    <property type="entry name" value="VPS28 C-terminal domain-like"/>
    <property type="match status" value="1"/>
</dbReference>
<dbReference type="PROSITE" id="PS51310">
    <property type="entry name" value="VPS28_C"/>
    <property type="match status" value="1"/>
</dbReference>
<dbReference type="PROSITE" id="PS51313">
    <property type="entry name" value="VPS28_N"/>
    <property type="match status" value="1"/>
</dbReference>
<gene>
    <name type="primary">VPS28</name>
    <name type="synonym">VPT28</name>
    <name type="ordered locus">YPL065W</name>
    <name type="ORF">LPE5W</name>
</gene>
<organism>
    <name type="scientific">Saccharomyces cerevisiae (strain ATCC 204508 / S288c)</name>
    <name type="common">Baker's yeast</name>
    <dbReference type="NCBI Taxonomy" id="559292"/>
    <lineage>
        <taxon>Eukaryota</taxon>
        <taxon>Fungi</taxon>
        <taxon>Dikarya</taxon>
        <taxon>Ascomycota</taxon>
        <taxon>Saccharomycotina</taxon>
        <taxon>Saccharomycetes</taxon>
        <taxon>Saccharomycetales</taxon>
        <taxon>Saccharomycetaceae</taxon>
        <taxon>Saccharomyces</taxon>
    </lineage>
</organism>
<name>VPS28_YEAST</name>
<comment type="function">
    <text>Component of the ESCRT-I complex, a regulator of vesicular trafficking process. Required for normal endocytic and biosynthetic traffic to the yeast vacuole.</text>
</comment>
<comment type="subunit">
    <text evidence="3 5 6 7">Component of the ESCRT-I complex (endosomal sorting complex required for transport I) which consists of STP22, VPS28, SRN2 and MVB12 in a 1:1:1:1 stoichiometry. Self-associates. Interacts with VPS27; the interaction mediates the association with the ESCRT-0 complex. Interacts with VPS20; the interaction mediates the association with the ESCRT-III complex.</text>
</comment>
<comment type="interaction">
    <interactant intactId="EBI-20387">
        <id>Q02767</id>
    </interactant>
    <interactant intactId="EBI-18076">
        <id>Q99176</id>
        <label>SRN2</label>
    </interactant>
    <organismsDiffer>false</organismsDiffer>
    <experiments>5</experiments>
</comment>
<comment type="interaction">
    <interactant intactId="EBI-20387">
        <id>Q02767</id>
    </interactant>
    <interactant intactId="EBI-411625">
        <id>P25604</id>
        <label>STP22</label>
    </interactant>
    <organismsDiffer>false</organismsDiffer>
    <experiments>4</experiments>
</comment>
<comment type="interaction">
    <interactant intactId="EBI-20387">
        <id>Q02767</id>
    </interactant>
    <interactant intactId="EBI-36540">
        <id>Q06696</id>
        <label>VPS36</label>
    </interactant>
    <organismsDiffer>false</organismsDiffer>
    <experiments>6</experiments>
</comment>
<comment type="subcellular location">
    <subcellularLocation>
        <location>Cytoplasm</location>
    </subcellularLocation>
    <subcellularLocation>
        <location>Endosome</location>
    </subcellularLocation>
    <subcellularLocation>
        <location evidence="8">Late endosome membrane</location>
        <topology evidence="8">Peripheral membrane protein</topology>
    </subcellularLocation>
</comment>
<comment type="miscellaneous">
    <text evidence="4">Present with 1420 molecules/cell in log phase SD medium.</text>
</comment>
<comment type="similarity">
    <text evidence="1 2">Belongs to the VPS28 family.</text>
</comment>